<comment type="function">
    <text evidence="6 10">Part of the binary chitinolytic system. Involved in hydrolysis of chitobiose and higher chito-oligomers (produced from cell wall chitin by endochitinases), thus contributing to the formation of germ tubes, fruit-bodies and septa during hyphenation (Probable). Hydrolyzes synthetic substrates p-nitrophenyl-beta-N-acetyl-glucosamine (pNP-beta-GlcNAc), p-nitrophenyl-beta-N-acetyl-galactosamine (pNP-beta-GalNAc) and 5-bromo-4-chloro-3-indoyl-beta-D-N-glucosaminide (X-GlcNAc) (PubMed:12450128).</text>
</comment>
<comment type="catalytic activity">
    <reaction evidence="4 6">
        <text>Hydrolysis of terminal non-reducing N-acetyl-D-hexosamine residues in N-acetyl-beta-D-hexosaminides.</text>
        <dbReference type="EC" id="3.2.1.52"/>
    </reaction>
</comment>
<comment type="biophysicochemical properties">
    <phDependence>
        <text evidence="6">Optimum pH is 4-5.</text>
    </phDependence>
    <temperatureDependence>
        <text evidence="6">Optimum temperature is 52 degrees Celsius.</text>
    </temperatureDependence>
</comment>
<comment type="subunit">
    <text evidence="2">Homodimer.</text>
</comment>
<comment type="subcellular location">
    <subcellularLocation>
        <location evidence="6">Secreted</location>
    </subcellularLocation>
</comment>
<comment type="developmental stage">
    <text evidence="7">Highly expressed during the stationary phase and high levels remain in the autolytic stage.</text>
</comment>
<comment type="induction">
    <text evidence="7">Significantly up-regulated expression with colloidal chitin and chito-oligomers, namely N-acetyl-D-glucosamine (GlcNAc), N,N'-diacetylchitobiose (GlcNAc)2 and N,N',N''-triacetylchitotriose (GlcNAc)3. Expression is unaffected by the oxidative-stress-generating agents tested including menadione, hydrogen peroxide and diamide.</text>
</comment>
<comment type="disruption phenotype">
    <text evidence="6">Normal growth rate, cellular morphology and efficiency of conidial formation when grown on easily metabolizable carbon sources YG (complex) or MM-glucose (complete) media. Grows poorly on a medium with chitobiose as a sole carbon source. Low level of beta-N-acetylglucosaminidase activity.</text>
</comment>
<comment type="biotechnology">
    <text evidence="8">This enzyme can be produced in large-scale and may be used for the enzymatic synthesis of complex type sugar chains containing GlcNAc and GalNAc as components.</text>
</comment>
<comment type="similarity">
    <text evidence="4">Belongs to the glycosyl hydrolase 20 family.</text>
</comment>
<proteinExistence type="evidence at protein level"/>
<name>HEXA_EMEND</name>
<accession>Q9HGI3</accession>
<accession>Q5BD78</accession>
<feature type="signal peptide" evidence="3">
    <location>
        <begin position="1"/>
        <end position="19"/>
    </location>
</feature>
<feature type="chain" id="PRO_5004330883" description="Beta-hexosaminidase" evidence="3">
    <location>
        <begin position="20"/>
        <end position="603"/>
    </location>
</feature>
<feature type="active site" description="Charge relay system" evidence="1">
    <location>
        <position position="225"/>
    </location>
</feature>
<feature type="active site" description="Charge relay system" evidence="1">
    <location>
        <position position="278"/>
    </location>
</feature>
<feature type="active site" description="Charge relay system" evidence="1">
    <location>
        <position position="349"/>
    </location>
</feature>
<feature type="site" description="Important determinant of glycosidic bond specificity" evidence="1">
    <location>
        <position position="309"/>
    </location>
</feature>
<feature type="site" description="Essential for chitooligosaccharide substrate binding" evidence="1">
    <location>
        <position position="485"/>
    </location>
</feature>
<feature type="glycosylation site" description="N-linked (GlcNAc...) asparagine" evidence="5">
    <location>
        <position position="356"/>
    </location>
</feature>
<feature type="glycosylation site" description="N-linked (GlcNAc...) asparagine" evidence="5">
    <location>
        <position position="503"/>
    </location>
</feature>
<feature type="glycosylation site" description="N-linked (GlcNAc...) asparagine" evidence="5">
    <location>
        <position position="528"/>
    </location>
</feature>
<feature type="disulfide bond" evidence="2">
    <location>
        <begin position="293"/>
        <end position="354"/>
    </location>
</feature>
<feature type="disulfide bond" evidence="2">
    <location>
        <begin position="451"/>
        <end position="486"/>
    </location>
</feature>
<feature type="disulfide bond" evidence="2">
    <location>
        <begin position="586"/>
        <end position="593"/>
    </location>
</feature>
<dbReference type="EC" id="3.2.1.52" evidence="4 6"/>
<dbReference type="EMBL" id="AB039846">
    <property type="protein sequence ID" value="BAB13330.1"/>
    <property type="molecule type" value="Genomic_DNA"/>
</dbReference>
<dbReference type="PIR" id="JC7900">
    <property type="entry name" value="JC7900"/>
</dbReference>
<dbReference type="SMR" id="Q9HGI3"/>
<dbReference type="GlyCosmos" id="Q9HGI3">
    <property type="glycosylation" value="3 sites, No reported glycans"/>
</dbReference>
<dbReference type="OMA" id="KMWPRAA"/>
<dbReference type="GO" id="GO:0005576">
    <property type="term" value="C:extracellular region"/>
    <property type="evidence" value="ECO:0000314"/>
    <property type="project" value="UniProtKB"/>
</dbReference>
<dbReference type="GO" id="GO:0016020">
    <property type="term" value="C:membrane"/>
    <property type="evidence" value="ECO:0007669"/>
    <property type="project" value="TreeGrafter"/>
</dbReference>
<dbReference type="GO" id="GO:0016231">
    <property type="term" value="F:beta-N-acetylglucosaminidase activity"/>
    <property type="evidence" value="ECO:0007669"/>
    <property type="project" value="TreeGrafter"/>
</dbReference>
<dbReference type="GO" id="GO:0004563">
    <property type="term" value="F:beta-N-acetylhexosaminidase activity"/>
    <property type="evidence" value="ECO:0000314"/>
    <property type="project" value="UniProtKB"/>
</dbReference>
<dbReference type="GO" id="GO:0015929">
    <property type="term" value="F:hexosaminidase activity"/>
    <property type="evidence" value="ECO:0000314"/>
    <property type="project" value="UniProtKB"/>
</dbReference>
<dbReference type="GO" id="GO:0052781">
    <property type="term" value="P:chitobiose catabolic process"/>
    <property type="evidence" value="ECO:0000315"/>
    <property type="project" value="UniProtKB"/>
</dbReference>
<dbReference type="GO" id="GO:0030203">
    <property type="term" value="P:glycosaminoglycan metabolic process"/>
    <property type="evidence" value="ECO:0007669"/>
    <property type="project" value="TreeGrafter"/>
</dbReference>
<dbReference type="GO" id="GO:0000272">
    <property type="term" value="P:polysaccharide catabolic process"/>
    <property type="evidence" value="ECO:0007669"/>
    <property type="project" value="UniProtKB-KW"/>
</dbReference>
<dbReference type="CDD" id="cd06562">
    <property type="entry name" value="GH20_HexA_HexB-like"/>
    <property type="match status" value="1"/>
</dbReference>
<dbReference type="FunFam" id="3.20.20.80:FF:000063">
    <property type="entry name" value="Beta-hexosaminidase"/>
    <property type="match status" value="1"/>
</dbReference>
<dbReference type="Gene3D" id="3.30.379.10">
    <property type="entry name" value="Chitobiase/beta-hexosaminidase domain 2-like"/>
    <property type="match status" value="1"/>
</dbReference>
<dbReference type="Gene3D" id="3.20.20.80">
    <property type="entry name" value="Glycosidases"/>
    <property type="match status" value="1"/>
</dbReference>
<dbReference type="InterPro" id="IPR025705">
    <property type="entry name" value="Beta_hexosaminidase_sua/sub"/>
</dbReference>
<dbReference type="InterPro" id="IPR015883">
    <property type="entry name" value="Glyco_hydro_20_cat"/>
</dbReference>
<dbReference type="InterPro" id="IPR017853">
    <property type="entry name" value="Glycoside_hydrolase_SF"/>
</dbReference>
<dbReference type="InterPro" id="IPR029018">
    <property type="entry name" value="Hex-like_dom2"/>
</dbReference>
<dbReference type="InterPro" id="IPR029019">
    <property type="entry name" value="HEX_eukaryotic_N"/>
</dbReference>
<dbReference type="PANTHER" id="PTHR22600">
    <property type="entry name" value="BETA-HEXOSAMINIDASE"/>
    <property type="match status" value="1"/>
</dbReference>
<dbReference type="PANTHER" id="PTHR22600:SF26">
    <property type="entry name" value="BETA-N-ACETYLHEXOSAMINIDASE"/>
    <property type="match status" value="1"/>
</dbReference>
<dbReference type="Pfam" id="PF00728">
    <property type="entry name" value="Glyco_hydro_20"/>
    <property type="match status" value="1"/>
</dbReference>
<dbReference type="Pfam" id="PF14845">
    <property type="entry name" value="Glycohydro_20b2"/>
    <property type="match status" value="1"/>
</dbReference>
<dbReference type="PIRSF" id="PIRSF001093">
    <property type="entry name" value="B-hxosamndse_ab_euk"/>
    <property type="match status" value="1"/>
</dbReference>
<dbReference type="PRINTS" id="PR00738">
    <property type="entry name" value="GLHYDRLASE20"/>
</dbReference>
<dbReference type="SUPFAM" id="SSF51445">
    <property type="entry name" value="(Trans)glycosidases"/>
    <property type="match status" value="1"/>
</dbReference>
<dbReference type="SUPFAM" id="SSF55545">
    <property type="entry name" value="beta-N-acetylhexosaminidase-like domain"/>
    <property type="match status" value="1"/>
</dbReference>
<sequence length="603" mass="67984">MAYFRLYAVLLAVASSVAAVKVNPLPAPRHISWGHSGPKPLSDVSLRTERDTDDSILTNAWNRAWETIVSLEWVPAGIEAPIPEFDEFPTSTPSASAAATRSKRANVPIQFVDVDVEDWDADLQHGVDESYTLDAKAGSDAIDITAKTVWGALHAFTTLQQLVISDGNGGLILEQPVHIKDAPLYPYRGLMVDTGRNFISVRKLHEQLDGMALSKLNVLHWHLDDTQSWPVHIDAYPEMTKDAYSARETYSHDDLRNVVAYARARGIRVIPEIDMPAHSASGWQQVDPDIVACANSWWSNDNWPLHTAVQPNPGQLDIINPKTYEVVQDVYEELSSIFTDDWFHVGGDEIQPNCYNFSTYVTEWFQEDPSRTYNDLMQHWVDKAVPIFRSVSDSRRLVMWEDVVLNTEHADDVPTDIVMQSWNNGLENINKLTERGYDVIVSSADFMYLDCGRGGYVTNDDRYNEQTNPDPDTPSFNYGGIGGSWCGPYKTWQRIYNYDFTLNLTNAQAKHVIGATAPLWSEQVDDVNISNLFWPRAAALAELVWSGNRDAKGNKRTTLFTQRILNFREYLLANGVMAATVVPKYCLQHPHACDLNYDQTVLH</sequence>
<protein>
    <recommendedName>
        <fullName evidence="4">Beta-hexosaminidase</fullName>
        <ecNumber evidence="4 6">3.2.1.52</ecNumber>
    </recommendedName>
    <alternativeName>
        <fullName evidence="8">Beta-N-acetylglucosaminidase</fullName>
    </alternativeName>
    <alternativeName>
        <fullName evidence="9">N-acetyl-beta-D-glucosaminidase NagA</fullName>
    </alternativeName>
</protein>
<evidence type="ECO:0000250" key="1">
    <source>
        <dbReference type="UniProtKB" id="Q06GJ0"/>
    </source>
</evidence>
<evidence type="ECO:0000250" key="2">
    <source>
        <dbReference type="UniProtKB" id="Q8J2T0"/>
    </source>
</evidence>
<evidence type="ECO:0000255" key="3"/>
<evidence type="ECO:0000255" key="4">
    <source>
        <dbReference type="PIRNR" id="PIRNR001093"/>
    </source>
</evidence>
<evidence type="ECO:0000255" key="5">
    <source>
        <dbReference type="PROSITE-ProRule" id="PRU00498"/>
    </source>
</evidence>
<evidence type="ECO:0000269" key="6">
    <source>
    </source>
</evidence>
<evidence type="ECO:0000269" key="7">
    <source>
    </source>
</evidence>
<evidence type="ECO:0000303" key="8">
    <source>
    </source>
</evidence>
<evidence type="ECO:0000303" key="9">
    <source>
    </source>
</evidence>
<evidence type="ECO:0000305" key="10"/>
<evidence type="ECO:0000312" key="11">
    <source>
        <dbReference type="EMBL" id="BAB13330.1"/>
    </source>
</evidence>
<reference evidence="11" key="1">
    <citation type="journal article" date="2002" name="Biosci. Biotechnol. Biochem.">
        <title>Cloning and characterization of the nagA gene that encodes beta-n-acetylglucosaminidase from Aspergillus nidulans and its expression in Aspergillus oryzae.</title>
        <authorList>
            <person name="Kim S."/>
            <person name="Matsuo I."/>
            <person name="Ajisaka K."/>
            <person name="Nakajima H."/>
            <person name="Kitamoto K."/>
        </authorList>
    </citation>
    <scope>NUCLEOTIDE SEQUENCE [GENOMIC DNA]</scope>
    <scope>FUNCTION</scope>
    <scope>CATALYTIC ACTIVITY</scope>
    <scope>BIOPHYSICOCHEMICAL PROPERTIES</scope>
    <scope>SUBCELLULAR LOCATION</scope>
    <scope>DISRUPTION PHENOTYPE</scope>
    <scope>BIOTECHNOLOGY</scope>
    <source>
        <strain evidence="8">A26</strain>
    </source>
</reference>
<reference key="2">
    <citation type="journal article" date="2006" name="Folia Microbiol. (Praha)">
        <title>Comparative studies of differential expression of chitinolytic enzymes encoded by chiA, chiB, chiC and nagA genes in Aspergillus nidulans.</title>
        <authorList>
            <person name="Pusztahelyi T."/>
            <person name="Molnar Z."/>
            <person name="Emri T."/>
            <person name="Klement E."/>
            <person name="Miskei M."/>
            <person name="Kerekgyarto J."/>
            <person name="Balla J."/>
            <person name="Pocsi I."/>
        </authorList>
    </citation>
    <scope>DEVELOPMENTAL STAGE</scope>
    <scope>INDUCTION</scope>
    <source>
        <strain evidence="9">FGSC 26</strain>
    </source>
</reference>
<gene>
    <name evidence="8 11" type="primary">nagA</name>
</gene>
<organism evidence="11">
    <name type="scientific">Emericella nidulans</name>
    <name type="common">Aspergillus nidulans</name>
    <dbReference type="NCBI Taxonomy" id="162425"/>
    <lineage>
        <taxon>Eukaryota</taxon>
        <taxon>Fungi</taxon>
        <taxon>Dikarya</taxon>
        <taxon>Ascomycota</taxon>
        <taxon>Pezizomycotina</taxon>
        <taxon>Eurotiomycetes</taxon>
        <taxon>Eurotiomycetidae</taxon>
        <taxon>Eurotiales</taxon>
        <taxon>Aspergillaceae</taxon>
        <taxon>Aspergillus</taxon>
        <taxon>Aspergillus subgen. Nidulantes</taxon>
    </lineage>
</organism>
<keyword id="KW-0119">Carbohydrate metabolism</keyword>
<keyword id="KW-1015">Disulfide bond</keyword>
<keyword id="KW-0325">Glycoprotein</keyword>
<keyword id="KW-0326">Glycosidase</keyword>
<keyword id="KW-0378">Hydrolase</keyword>
<keyword id="KW-0624">Polysaccharide degradation</keyword>
<keyword id="KW-0964">Secreted</keyword>
<keyword id="KW-0732">Signal</keyword>